<feature type="chain" id="PRO_0000324078" description="Light-independent protochlorophyllide reductase iron-sulfur ATP-binding protein">
    <location>
        <begin position="1"/>
        <end position="283"/>
    </location>
</feature>
<feature type="binding site" evidence="1">
    <location>
        <begin position="15"/>
        <end position="20"/>
    </location>
    <ligand>
        <name>ATP</name>
        <dbReference type="ChEBI" id="CHEBI:30616"/>
    </ligand>
</feature>
<feature type="binding site" evidence="1">
    <location>
        <position position="19"/>
    </location>
    <ligand>
        <name>Mg(2+)</name>
        <dbReference type="ChEBI" id="CHEBI:18420"/>
    </ligand>
</feature>
<feature type="binding site" evidence="1">
    <location>
        <position position="44"/>
    </location>
    <ligand>
        <name>ATP</name>
        <dbReference type="ChEBI" id="CHEBI:30616"/>
    </ligand>
</feature>
<feature type="binding site" evidence="1">
    <location>
        <position position="100"/>
    </location>
    <ligand>
        <name>[4Fe-4S] cluster</name>
        <dbReference type="ChEBI" id="CHEBI:49883"/>
        <note>ligand shared between dimeric partners</note>
    </ligand>
</feature>
<feature type="binding site" evidence="1">
    <location>
        <position position="134"/>
    </location>
    <ligand>
        <name>[4Fe-4S] cluster</name>
        <dbReference type="ChEBI" id="CHEBI:49883"/>
        <note>ligand shared between dimeric partners</note>
    </ligand>
</feature>
<feature type="binding site" evidence="1">
    <location>
        <begin position="185"/>
        <end position="186"/>
    </location>
    <ligand>
        <name>ATP</name>
        <dbReference type="ChEBI" id="CHEBI:30616"/>
    </ligand>
</feature>
<name>CHLL_SYNJB</name>
<organism>
    <name type="scientific">Synechococcus sp. (strain JA-2-3B'a(2-13))</name>
    <name type="common">Cyanobacteria bacterium Yellowstone B-Prime</name>
    <dbReference type="NCBI Taxonomy" id="321332"/>
    <lineage>
        <taxon>Bacteria</taxon>
        <taxon>Bacillati</taxon>
        <taxon>Cyanobacteriota</taxon>
        <taxon>Cyanophyceae</taxon>
        <taxon>Synechococcales</taxon>
        <taxon>Synechococcaceae</taxon>
        <taxon>Synechococcus</taxon>
    </lineage>
</organism>
<sequence>MEERAVKLAVYGKGGIGKSTTSCNISVALARRGKKVLQIGCDPKHDSTFTLTGFLIPTIIDTLEAKGYHHEDIYPEDVIYRGYGGVDCVEAGGPPAGAGCGGYVVGETVKLLKELNAFDEYDVILFDVLGDVVCGGFAAPLNYADYCLIVTDNGFDALFAANRIAASVREKAKTRKLRLAGLIGNRTSKRDLIDKYVSAVPMPVIEVLPLIEDIRVSRVKGKTLFEMAETDPSLEPVCQYYLNIADELLARPEGIVPQPAEDRELFALLSDFYNTPARQLALV</sequence>
<protein>
    <recommendedName>
        <fullName evidence="1">Light-independent protochlorophyllide reductase iron-sulfur ATP-binding protein</fullName>
        <shortName evidence="1">DPOR subunit L</shortName>
        <shortName evidence="1">LI-POR subunit L</shortName>
        <ecNumber evidence="1">1.3.7.7</ecNumber>
    </recommendedName>
</protein>
<keyword id="KW-0004">4Fe-4S</keyword>
<keyword id="KW-0067">ATP-binding</keyword>
<keyword id="KW-0149">Chlorophyll biosynthesis</keyword>
<keyword id="KW-0408">Iron</keyword>
<keyword id="KW-0411">Iron-sulfur</keyword>
<keyword id="KW-0460">Magnesium</keyword>
<keyword id="KW-0479">Metal-binding</keyword>
<keyword id="KW-0547">Nucleotide-binding</keyword>
<keyword id="KW-0560">Oxidoreductase</keyword>
<keyword id="KW-0602">Photosynthesis</keyword>
<keyword id="KW-1185">Reference proteome</keyword>
<proteinExistence type="inferred from homology"/>
<dbReference type="EC" id="1.3.7.7" evidence="1"/>
<dbReference type="EMBL" id="CP000240">
    <property type="protein sequence ID" value="ABD01994.1"/>
    <property type="molecule type" value="Genomic_DNA"/>
</dbReference>
<dbReference type="SMR" id="Q2JMP3"/>
<dbReference type="STRING" id="321332.CYB_1016"/>
<dbReference type="KEGG" id="cyb:CYB_1016"/>
<dbReference type="eggNOG" id="COG1348">
    <property type="taxonomic scope" value="Bacteria"/>
</dbReference>
<dbReference type="HOGENOM" id="CLU_059373_2_0_3"/>
<dbReference type="UniPathway" id="UPA00670"/>
<dbReference type="Proteomes" id="UP000001938">
    <property type="component" value="Chromosome"/>
</dbReference>
<dbReference type="GO" id="GO:0051539">
    <property type="term" value="F:4 iron, 4 sulfur cluster binding"/>
    <property type="evidence" value="ECO:0007669"/>
    <property type="project" value="UniProtKB-UniRule"/>
</dbReference>
<dbReference type="GO" id="GO:0005524">
    <property type="term" value="F:ATP binding"/>
    <property type="evidence" value="ECO:0007669"/>
    <property type="project" value="UniProtKB-UniRule"/>
</dbReference>
<dbReference type="GO" id="GO:0046872">
    <property type="term" value="F:metal ion binding"/>
    <property type="evidence" value="ECO:0007669"/>
    <property type="project" value="UniProtKB-KW"/>
</dbReference>
<dbReference type="GO" id="GO:0016730">
    <property type="term" value="F:oxidoreductase activity, acting on iron-sulfur proteins as donors"/>
    <property type="evidence" value="ECO:0007669"/>
    <property type="project" value="InterPro"/>
</dbReference>
<dbReference type="GO" id="GO:0016636">
    <property type="term" value="F:oxidoreductase activity, acting on the CH-CH group of donors, iron-sulfur protein as acceptor"/>
    <property type="evidence" value="ECO:0007669"/>
    <property type="project" value="UniProtKB-UniRule"/>
</dbReference>
<dbReference type="GO" id="GO:0036068">
    <property type="term" value="P:light-independent chlorophyll biosynthetic process"/>
    <property type="evidence" value="ECO:0007669"/>
    <property type="project" value="UniProtKB-UniRule"/>
</dbReference>
<dbReference type="GO" id="GO:0019685">
    <property type="term" value="P:photosynthesis, dark reaction"/>
    <property type="evidence" value="ECO:0007669"/>
    <property type="project" value="InterPro"/>
</dbReference>
<dbReference type="CDD" id="cd02032">
    <property type="entry name" value="Bchl-like"/>
    <property type="match status" value="1"/>
</dbReference>
<dbReference type="Gene3D" id="3.40.50.300">
    <property type="entry name" value="P-loop containing nucleotide triphosphate hydrolases"/>
    <property type="match status" value="1"/>
</dbReference>
<dbReference type="HAMAP" id="MF_00355">
    <property type="entry name" value="ChlL_BchL"/>
    <property type="match status" value="1"/>
</dbReference>
<dbReference type="InterPro" id="IPR030655">
    <property type="entry name" value="NifH/chlL_CS"/>
</dbReference>
<dbReference type="InterPro" id="IPR000392">
    <property type="entry name" value="NifH/frxC"/>
</dbReference>
<dbReference type="InterPro" id="IPR027417">
    <property type="entry name" value="P-loop_NTPase"/>
</dbReference>
<dbReference type="InterPro" id="IPR005971">
    <property type="entry name" value="Protochlorophyllide_ATP-bd"/>
</dbReference>
<dbReference type="NCBIfam" id="TIGR01281">
    <property type="entry name" value="DPOR_bchL"/>
    <property type="match status" value="1"/>
</dbReference>
<dbReference type="PANTHER" id="PTHR42864">
    <property type="entry name" value="LIGHT-INDEPENDENT PROTOCHLOROPHYLLIDE REDUCTASE IRON-SULFUR ATP-BINDING PROTEIN"/>
    <property type="match status" value="1"/>
</dbReference>
<dbReference type="PANTHER" id="PTHR42864:SF2">
    <property type="entry name" value="LIGHT-INDEPENDENT PROTOCHLOROPHYLLIDE REDUCTASE IRON-SULFUR ATP-BINDING PROTEIN"/>
    <property type="match status" value="1"/>
</dbReference>
<dbReference type="Pfam" id="PF00142">
    <property type="entry name" value="Fer4_NifH"/>
    <property type="match status" value="1"/>
</dbReference>
<dbReference type="PIRSF" id="PIRSF000363">
    <property type="entry name" value="Nitrogenase_iron"/>
    <property type="match status" value="1"/>
</dbReference>
<dbReference type="PRINTS" id="PR00091">
    <property type="entry name" value="NITROGNASEII"/>
</dbReference>
<dbReference type="SUPFAM" id="SSF52540">
    <property type="entry name" value="P-loop containing nucleoside triphosphate hydrolases"/>
    <property type="match status" value="1"/>
</dbReference>
<dbReference type="PROSITE" id="PS00746">
    <property type="entry name" value="NIFH_FRXC_1"/>
    <property type="match status" value="1"/>
</dbReference>
<dbReference type="PROSITE" id="PS00692">
    <property type="entry name" value="NIFH_FRXC_2"/>
    <property type="match status" value="1"/>
</dbReference>
<dbReference type="PROSITE" id="PS51026">
    <property type="entry name" value="NIFH_FRXC_3"/>
    <property type="match status" value="1"/>
</dbReference>
<gene>
    <name evidence="1" type="primary">chlL</name>
    <name type="ordered locus">CYB_1016</name>
</gene>
<comment type="function">
    <text evidence="1">Component of the dark-operative protochlorophyllide reductase (DPOR) that uses Mg-ATP and reduced ferredoxin to reduce ring D of protochlorophyllide (Pchlide) to form chlorophyllide a (Chlide). This reaction is light-independent. The L component serves as a unique electron donor to the NB-component of the complex, and binds Mg-ATP.</text>
</comment>
<comment type="catalytic activity">
    <reaction evidence="1">
        <text>chlorophyllide a + oxidized 2[4Fe-4S]-[ferredoxin] + 2 ADP + 2 phosphate = protochlorophyllide a + reduced 2[4Fe-4S]-[ferredoxin] + 2 ATP + 2 H2O</text>
        <dbReference type="Rhea" id="RHEA:28202"/>
        <dbReference type="Rhea" id="RHEA-COMP:10002"/>
        <dbReference type="Rhea" id="RHEA-COMP:10004"/>
        <dbReference type="ChEBI" id="CHEBI:15377"/>
        <dbReference type="ChEBI" id="CHEBI:30616"/>
        <dbReference type="ChEBI" id="CHEBI:33722"/>
        <dbReference type="ChEBI" id="CHEBI:33723"/>
        <dbReference type="ChEBI" id="CHEBI:43474"/>
        <dbReference type="ChEBI" id="CHEBI:83348"/>
        <dbReference type="ChEBI" id="CHEBI:83350"/>
        <dbReference type="ChEBI" id="CHEBI:456216"/>
        <dbReference type="EC" id="1.3.7.7"/>
    </reaction>
</comment>
<comment type="cofactor">
    <cofactor evidence="1">
        <name>[4Fe-4S] cluster</name>
        <dbReference type="ChEBI" id="CHEBI:49883"/>
    </cofactor>
    <text evidence="1">Binds 1 [4Fe-4S] cluster per dimer.</text>
</comment>
<comment type="pathway">
    <text evidence="1">Porphyrin-containing compound metabolism; chlorophyll biosynthesis (light-independent).</text>
</comment>
<comment type="subunit">
    <text evidence="1">Homodimer. Protochlorophyllide reductase is composed of three subunits; ChlL, ChlN and ChlB.</text>
</comment>
<comment type="similarity">
    <text evidence="1">Belongs to the NifH/BchL/ChlL family.</text>
</comment>
<reference key="1">
    <citation type="journal article" date="2007" name="ISME J.">
        <title>Population level functional diversity in a microbial community revealed by comparative genomic and metagenomic analyses.</title>
        <authorList>
            <person name="Bhaya D."/>
            <person name="Grossman A.R."/>
            <person name="Steunou A.-S."/>
            <person name="Khuri N."/>
            <person name="Cohan F.M."/>
            <person name="Hamamura N."/>
            <person name="Melendrez M.C."/>
            <person name="Bateson M.M."/>
            <person name="Ward D.M."/>
            <person name="Heidelberg J.F."/>
        </authorList>
    </citation>
    <scope>NUCLEOTIDE SEQUENCE [LARGE SCALE GENOMIC DNA]</scope>
    <source>
        <strain>JA-2-3B'a(2-13)</strain>
    </source>
</reference>
<evidence type="ECO:0000255" key="1">
    <source>
        <dbReference type="HAMAP-Rule" id="MF_00355"/>
    </source>
</evidence>
<accession>Q2JMP3</accession>